<protein>
    <recommendedName>
        <fullName evidence="1">Large ribosomal subunit protein bL31B</fullName>
    </recommendedName>
    <alternativeName>
        <fullName evidence="2">50S ribosomal protein L31 type B</fullName>
    </alternativeName>
</protein>
<name>RL31B_LISMO</name>
<evidence type="ECO:0000255" key="1">
    <source>
        <dbReference type="HAMAP-Rule" id="MF_00502"/>
    </source>
</evidence>
<evidence type="ECO:0000305" key="2"/>
<evidence type="ECO:0007829" key="3">
    <source>
        <dbReference type="PDB" id="8A57"/>
    </source>
</evidence>
<feature type="chain" id="PRO_0000173236" description="Large ribosomal subunit protein bL31B">
    <location>
        <begin position="1"/>
        <end position="81"/>
    </location>
</feature>
<feature type="sequence conflict" description="In Ref. 1; AAD09999." evidence="2" ref="1">
    <original>ADGRVDR</original>
    <variation>QTAVWTA</variation>
    <location>
        <begin position="67"/>
        <end position="73"/>
    </location>
</feature>
<feature type="strand" evidence="3">
    <location>
        <begin position="3"/>
        <end position="6"/>
    </location>
</feature>
<feature type="strand" evidence="3">
    <location>
        <begin position="13"/>
        <end position="16"/>
    </location>
</feature>
<feature type="turn" evidence="3">
    <location>
        <begin position="17"/>
        <end position="19"/>
    </location>
</feature>
<feature type="strand" evidence="3">
    <location>
        <begin position="22"/>
        <end position="24"/>
    </location>
</feature>
<feature type="strand" evidence="3">
    <location>
        <begin position="36"/>
        <end position="41"/>
    </location>
</feature>
<feature type="strand" evidence="3">
    <location>
        <begin position="45"/>
        <end position="48"/>
    </location>
</feature>
<feature type="turn" evidence="3">
    <location>
        <begin position="52"/>
        <end position="54"/>
    </location>
</feature>
<feature type="turn" evidence="3">
    <location>
        <begin position="56"/>
        <end position="58"/>
    </location>
</feature>
<reference key="1">
    <citation type="journal article" date="1999" name="J. Bacteriol.">
        <title>Cell wall teichoic acid glycosylation in Listeria monocytogenes serotype 4b requires gtcA, a novel, serogroup-specific gene.</title>
        <authorList>
            <person name="Promadej N."/>
            <person name="Fiedler F."/>
            <person name="Cossart P."/>
            <person name="Dramsi S."/>
            <person name="Kathariou S."/>
        </authorList>
    </citation>
    <scope>NUCLEOTIDE SEQUENCE [GENOMIC DNA]</scope>
    <source>
        <strain>4b1 / Serotype 4b</strain>
    </source>
</reference>
<reference key="2">
    <citation type="journal article" date="2001" name="Science">
        <title>Comparative genomics of Listeria species.</title>
        <authorList>
            <person name="Glaser P."/>
            <person name="Frangeul L."/>
            <person name="Buchrieser C."/>
            <person name="Rusniok C."/>
            <person name="Amend A."/>
            <person name="Baquero F."/>
            <person name="Berche P."/>
            <person name="Bloecker H."/>
            <person name="Brandt P."/>
            <person name="Chakraborty T."/>
            <person name="Charbit A."/>
            <person name="Chetouani F."/>
            <person name="Couve E."/>
            <person name="de Daruvar A."/>
            <person name="Dehoux P."/>
            <person name="Domann E."/>
            <person name="Dominguez-Bernal G."/>
            <person name="Duchaud E."/>
            <person name="Durant L."/>
            <person name="Dussurget O."/>
            <person name="Entian K.-D."/>
            <person name="Fsihi H."/>
            <person name="Garcia-del Portillo F."/>
            <person name="Garrido P."/>
            <person name="Gautier L."/>
            <person name="Goebel W."/>
            <person name="Gomez-Lopez N."/>
            <person name="Hain T."/>
            <person name="Hauf J."/>
            <person name="Jackson D."/>
            <person name="Jones L.-M."/>
            <person name="Kaerst U."/>
            <person name="Kreft J."/>
            <person name="Kuhn M."/>
            <person name="Kunst F."/>
            <person name="Kurapkat G."/>
            <person name="Madueno E."/>
            <person name="Maitournam A."/>
            <person name="Mata Vicente J."/>
            <person name="Ng E."/>
            <person name="Nedjari H."/>
            <person name="Nordsiek G."/>
            <person name="Novella S."/>
            <person name="de Pablos B."/>
            <person name="Perez-Diaz J.-C."/>
            <person name="Purcell R."/>
            <person name="Remmel B."/>
            <person name="Rose M."/>
            <person name="Schlueter T."/>
            <person name="Simoes N."/>
            <person name="Tierrez A."/>
            <person name="Vazquez-Boland J.-A."/>
            <person name="Voss H."/>
            <person name="Wehland J."/>
            <person name="Cossart P."/>
        </authorList>
    </citation>
    <scope>NUCLEOTIDE SEQUENCE [LARGE SCALE GENOMIC DNA]</scope>
    <source>
        <strain>ATCC BAA-679 / EGD-e</strain>
    </source>
</reference>
<proteinExistence type="evidence at protein level"/>
<gene>
    <name evidence="1" type="primary">rpmE2</name>
    <name type="synonym">rpmE</name>
    <name type="ordered locus">lmo2548</name>
</gene>
<sequence length="81" mass="9258">MKTGIHPEYRPVVFVDTSTDFKFLSGSTKSSSETIKWEDGNEYPLLRVEISSDSHPFYTGKQKHATADGRVDRFNKKYGLK</sequence>
<accession>P0A485</accession>
<accession>Q9KJU7</accession>
<accession>Q9ZH28</accession>
<organism>
    <name type="scientific">Listeria monocytogenes serovar 1/2a (strain ATCC BAA-679 / EGD-e)</name>
    <dbReference type="NCBI Taxonomy" id="169963"/>
    <lineage>
        <taxon>Bacteria</taxon>
        <taxon>Bacillati</taxon>
        <taxon>Bacillota</taxon>
        <taxon>Bacilli</taxon>
        <taxon>Bacillales</taxon>
        <taxon>Listeriaceae</taxon>
        <taxon>Listeria</taxon>
    </lineage>
</organism>
<comment type="subunit">
    <text evidence="1">Part of the 50S ribosomal subunit.</text>
</comment>
<comment type="similarity">
    <text evidence="1">Belongs to the bacterial ribosomal protein bL31 family. Type B subfamily.</text>
</comment>
<dbReference type="EMBL" id="AF072894">
    <property type="protein sequence ID" value="AAD09999.1"/>
    <property type="molecule type" value="Genomic_DNA"/>
</dbReference>
<dbReference type="EMBL" id="AL591983">
    <property type="protein sequence ID" value="CAD00626.1"/>
    <property type="molecule type" value="Genomic_DNA"/>
</dbReference>
<dbReference type="PIR" id="AD1393">
    <property type="entry name" value="AD1393"/>
</dbReference>
<dbReference type="RefSeq" id="NP_466071.1">
    <property type="nucleotide sequence ID" value="NC_003210.1"/>
</dbReference>
<dbReference type="RefSeq" id="WP_003726356.1">
    <property type="nucleotide sequence ID" value="NZ_CP149495.1"/>
</dbReference>
<dbReference type="PDB" id="7NHN">
    <property type="method" value="EM"/>
    <property type="resolution" value="2.90 A"/>
    <property type="chains" value="4=1-81"/>
</dbReference>
<dbReference type="PDB" id="8A57">
    <property type="method" value="EM"/>
    <property type="resolution" value="2.30 A"/>
    <property type="chains" value="4=1-81"/>
</dbReference>
<dbReference type="PDB" id="8A5I">
    <property type="method" value="EM"/>
    <property type="resolution" value="2.30 A"/>
    <property type="chains" value="4=1-81"/>
</dbReference>
<dbReference type="PDB" id="8A63">
    <property type="method" value="EM"/>
    <property type="resolution" value="3.10 A"/>
    <property type="chains" value="4=1-81"/>
</dbReference>
<dbReference type="PDBsum" id="7NHN"/>
<dbReference type="PDBsum" id="8A57"/>
<dbReference type="PDBsum" id="8A5I"/>
<dbReference type="PDBsum" id="8A63"/>
<dbReference type="EMDB" id="EMD-12334"/>
<dbReference type="EMDB" id="EMD-15161"/>
<dbReference type="EMDB" id="EMD-15175"/>
<dbReference type="EMDB" id="EMD-15204"/>
<dbReference type="SMR" id="P0A485"/>
<dbReference type="STRING" id="169963.gene:17595259"/>
<dbReference type="PaxDb" id="169963-lmo2548"/>
<dbReference type="EnsemblBacteria" id="CAD00626">
    <property type="protein sequence ID" value="CAD00626"/>
    <property type="gene ID" value="CAD00626"/>
</dbReference>
<dbReference type="GeneID" id="987268"/>
<dbReference type="KEGG" id="lmo:lmo2548"/>
<dbReference type="PATRIC" id="fig|169963.11.peg.2610"/>
<dbReference type="eggNOG" id="COG0254">
    <property type="taxonomic scope" value="Bacteria"/>
</dbReference>
<dbReference type="HOGENOM" id="CLU_114306_2_2_9"/>
<dbReference type="OrthoDB" id="9803251at2"/>
<dbReference type="PhylomeDB" id="P0A485"/>
<dbReference type="BioCyc" id="LMON169963:LMO2548-MONOMER"/>
<dbReference type="Proteomes" id="UP000000817">
    <property type="component" value="Chromosome"/>
</dbReference>
<dbReference type="GO" id="GO:1990904">
    <property type="term" value="C:ribonucleoprotein complex"/>
    <property type="evidence" value="ECO:0007669"/>
    <property type="project" value="UniProtKB-KW"/>
</dbReference>
<dbReference type="GO" id="GO:0005840">
    <property type="term" value="C:ribosome"/>
    <property type="evidence" value="ECO:0007669"/>
    <property type="project" value="UniProtKB-KW"/>
</dbReference>
<dbReference type="GO" id="GO:0003735">
    <property type="term" value="F:structural constituent of ribosome"/>
    <property type="evidence" value="ECO:0007669"/>
    <property type="project" value="InterPro"/>
</dbReference>
<dbReference type="GO" id="GO:0006412">
    <property type="term" value="P:translation"/>
    <property type="evidence" value="ECO:0007669"/>
    <property type="project" value="UniProtKB-UniRule"/>
</dbReference>
<dbReference type="Gene3D" id="4.10.830.30">
    <property type="entry name" value="Ribosomal protein L31"/>
    <property type="match status" value="1"/>
</dbReference>
<dbReference type="HAMAP" id="MF_00502">
    <property type="entry name" value="Ribosomal_bL31_2"/>
    <property type="match status" value="1"/>
</dbReference>
<dbReference type="InterPro" id="IPR034704">
    <property type="entry name" value="Ribosomal_bL28/bL31-like_sf"/>
</dbReference>
<dbReference type="InterPro" id="IPR002150">
    <property type="entry name" value="Ribosomal_bL31"/>
</dbReference>
<dbReference type="InterPro" id="IPR027493">
    <property type="entry name" value="Ribosomal_bL31_B"/>
</dbReference>
<dbReference type="InterPro" id="IPR042105">
    <property type="entry name" value="Ribosomal_bL31_sf"/>
</dbReference>
<dbReference type="NCBIfam" id="TIGR00105">
    <property type="entry name" value="L31"/>
    <property type="match status" value="1"/>
</dbReference>
<dbReference type="NCBIfam" id="NF002462">
    <property type="entry name" value="PRK01678.1"/>
    <property type="match status" value="1"/>
</dbReference>
<dbReference type="PANTHER" id="PTHR33280">
    <property type="entry name" value="50S RIBOSOMAL PROTEIN L31, CHLOROPLASTIC"/>
    <property type="match status" value="1"/>
</dbReference>
<dbReference type="PANTHER" id="PTHR33280:SF1">
    <property type="entry name" value="LARGE RIBOSOMAL SUBUNIT PROTEIN BL31C"/>
    <property type="match status" value="1"/>
</dbReference>
<dbReference type="Pfam" id="PF01197">
    <property type="entry name" value="Ribosomal_L31"/>
    <property type="match status" value="1"/>
</dbReference>
<dbReference type="PRINTS" id="PR01249">
    <property type="entry name" value="RIBOSOMALL31"/>
</dbReference>
<dbReference type="SUPFAM" id="SSF143800">
    <property type="entry name" value="L28p-like"/>
    <property type="match status" value="1"/>
</dbReference>
<dbReference type="PROSITE" id="PS01143">
    <property type="entry name" value="RIBOSOMAL_L31"/>
    <property type="match status" value="1"/>
</dbReference>
<keyword id="KW-0002">3D-structure</keyword>
<keyword id="KW-1185">Reference proteome</keyword>
<keyword id="KW-0687">Ribonucleoprotein</keyword>
<keyword id="KW-0689">Ribosomal protein</keyword>